<evidence type="ECO:0000255" key="1">
    <source>
        <dbReference type="PROSITE-ProRule" id="PRU01246"/>
    </source>
</evidence>
<accession>P55457</accession>
<organism>
    <name type="scientific">Sinorhizobium fredii (strain NBRC 101917 / NGR234)</name>
    <dbReference type="NCBI Taxonomy" id="394"/>
    <lineage>
        <taxon>Bacteria</taxon>
        <taxon>Pseudomonadati</taxon>
        <taxon>Pseudomonadota</taxon>
        <taxon>Alphaproteobacteria</taxon>
        <taxon>Hyphomicrobiales</taxon>
        <taxon>Rhizobiaceae</taxon>
        <taxon>Sinorhizobium/Ensifer group</taxon>
        <taxon>Sinorhizobium</taxon>
    </lineage>
</organism>
<geneLocation type="plasmid">
    <name>sym pNGR234a</name>
</geneLocation>
<comment type="similarity">
    <text evidence="1">Belongs to the 'phage' integrase family.</text>
</comment>
<sequence length="187" mass="20938">MCQWAATKGTRNHAYEREKLERAFAKILRHRDPSVPPRRSDPRPRKEVARQWRKPHIYSPADLRRMLDIARSYPSPRAALRQENMYTMLLLAYCAGLRRGELARLDLGDVNLGDGTITVRQTKFFKTRILPLPDSVVVSFGPISLHGVGSAHSRLLTPPCSGTNKAVPAPRQEGSPGCLQTSYVVPG</sequence>
<proteinExistence type="inferred from homology"/>
<dbReference type="EMBL" id="U00090">
    <property type="protein sequence ID" value="AAB91675.1"/>
    <property type="molecule type" value="Genomic_DNA"/>
</dbReference>
<dbReference type="RefSeq" id="NP_443863.1">
    <property type="nucleotide sequence ID" value="NC_000914.2"/>
</dbReference>
<dbReference type="SMR" id="P55457"/>
<dbReference type="KEGG" id="rhi:NGR_a03630"/>
<dbReference type="eggNOG" id="COG0582">
    <property type="taxonomic scope" value="Bacteria"/>
</dbReference>
<dbReference type="HOGENOM" id="CLU_1446571_0_0_5"/>
<dbReference type="OrthoDB" id="5464621at2"/>
<dbReference type="Proteomes" id="UP000001054">
    <property type="component" value="Plasmid pNGR234a"/>
</dbReference>
<dbReference type="GO" id="GO:0003677">
    <property type="term" value="F:DNA binding"/>
    <property type="evidence" value="ECO:0007669"/>
    <property type="project" value="InterPro"/>
</dbReference>
<dbReference type="GO" id="GO:0015074">
    <property type="term" value="P:DNA integration"/>
    <property type="evidence" value="ECO:0007669"/>
    <property type="project" value="InterPro"/>
</dbReference>
<dbReference type="GO" id="GO:0006310">
    <property type="term" value="P:DNA recombination"/>
    <property type="evidence" value="ECO:0007669"/>
    <property type="project" value="UniProtKB-KW"/>
</dbReference>
<dbReference type="Gene3D" id="1.10.443.10">
    <property type="entry name" value="Intergrase catalytic core"/>
    <property type="match status" value="1"/>
</dbReference>
<dbReference type="InterPro" id="IPR011010">
    <property type="entry name" value="DNA_brk_join_enz"/>
</dbReference>
<dbReference type="InterPro" id="IPR013762">
    <property type="entry name" value="Integrase-like_cat_sf"/>
</dbReference>
<dbReference type="InterPro" id="IPR002104">
    <property type="entry name" value="Integrase_catalytic"/>
</dbReference>
<dbReference type="Pfam" id="PF00589">
    <property type="entry name" value="Phage_integrase"/>
    <property type="match status" value="1"/>
</dbReference>
<dbReference type="SUPFAM" id="SSF56349">
    <property type="entry name" value="DNA breaking-rejoining enzymes"/>
    <property type="match status" value="1"/>
</dbReference>
<dbReference type="PROSITE" id="PS51898">
    <property type="entry name" value="TYR_RECOMBINASE"/>
    <property type="match status" value="1"/>
</dbReference>
<gene>
    <name type="ordered locus">NGR_a03630</name>
    <name type="ORF">y4gA</name>
</gene>
<name>Y4GA_SINFN</name>
<keyword id="KW-0233">DNA recombination</keyword>
<keyword id="KW-0614">Plasmid</keyword>
<keyword id="KW-1185">Reference proteome</keyword>
<protein>
    <recommendedName>
        <fullName>Uncharacterized protein y4gA</fullName>
    </recommendedName>
</protein>
<reference key="1">
    <citation type="journal article" date="1997" name="Nature">
        <title>Molecular basis of symbiosis between Rhizobium and legumes.</title>
        <authorList>
            <person name="Freiberg C.A."/>
            <person name="Fellay R."/>
            <person name="Bairoch A."/>
            <person name="Broughton W.J."/>
            <person name="Rosenthal A."/>
            <person name="Perret X."/>
        </authorList>
    </citation>
    <scope>NUCLEOTIDE SEQUENCE [LARGE SCALE GENOMIC DNA]</scope>
    <source>
        <strain>NBRC 101917 / NGR234</strain>
    </source>
</reference>
<reference key="2">
    <citation type="journal article" date="2009" name="Appl. Environ. Microbiol.">
        <title>Rhizobium sp. strain NGR234 possesses a remarkable number of secretion systems.</title>
        <authorList>
            <person name="Schmeisser C."/>
            <person name="Liesegang H."/>
            <person name="Krysciak D."/>
            <person name="Bakkou N."/>
            <person name="Le Quere A."/>
            <person name="Wollherr A."/>
            <person name="Heinemeyer I."/>
            <person name="Morgenstern B."/>
            <person name="Pommerening-Roeser A."/>
            <person name="Flores M."/>
            <person name="Palacios R."/>
            <person name="Brenner S."/>
            <person name="Gottschalk G."/>
            <person name="Schmitz R.A."/>
            <person name="Broughton W.J."/>
            <person name="Perret X."/>
            <person name="Strittmatter A.W."/>
            <person name="Streit W.R."/>
        </authorList>
    </citation>
    <scope>NUCLEOTIDE SEQUENCE [LARGE SCALE GENOMIC DNA]</scope>
    <source>
        <strain>NBRC 101917 / NGR234</strain>
    </source>
</reference>
<feature type="chain" id="PRO_0000200842" description="Uncharacterized protein y4gA">
    <location>
        <begin position="1"/>
        <end position="187"/>
    </location>
</feature>
<feature type="domain" description="Tyr recombinase" evidence="1">
    <location>
        <begin position="53"/>
        <end position="187"/>
    </location>
</feature>
<feature type="active site" evidence="1">
    <location>
        <position position="98"/>
    </location>
</feature>
<feature type="active site" evidence="1">
    <location>
        <position position="123"/>
    </location>
</feature>